<organism>
    <name type="scientific">Clostridium botulinum (strain Kyoto / Type A2)</name>
    <dbReference type="NCBI Taxonomy" id="536232"/>
    <lineage>
        <taxon>Bacteria</taxon>
        <taxon>Bacillati</taxon>
        <taxon>Bacillota</taxon>
        <taxon>Clostridia</taxon>
        <taxon>Eubacteriales</taxon>
        <taxon>Clostridiaceae</taxon>
        <taxon>Clostridium</taxon>
    </lineage>
</organism>
<proteinExistence type="inferred from homology"/>
<feature type="chain" id="PRO_1000187855" description="Beta-ketoacyl-[acyl-carrier-protein] synthase III">
    <location>
        <begin position="1"/>
        <end position="326"/>
    </location>
</feature>
<feature type="region of interest" description="ACP-binding" evidence="1">
    <location>
        <begin position="252"/>
        <end position="256"/>
    </location>
</feature>
<feature type="active site" evidence="1">
    <location>
        <position position="112"/>
    </location>
</feature>
<feature type="active site" evidence="1">
    <location>
        <position position="251"/>
    </location>
</feature>
<feature type="active site" evidence="1">
    <location>
        <position position="281"/>
    </location>
</feature>
<gene>
    <name evidence="1" type="primary">fabH</name>
    <name type="ordered locus">CLM_4096</name>
</gene>
<protein>
    <recommendedName>
        <fullName evidence="1">Beta-ketoacyl-[acyl-carrier-protein] synthase III</fullName>
        <shortName evidence="1">Beta-ketoacyl-ACP synthase III</shortName>
        <shortName evidence="1">KAS III</shortName>
        <ecNumber evidence="1">2.3.1.180</ecNumber>
    </recommendedName>
    <alternativeName>
        <fullName evidence="1">3-oxoacyl-[acyl-carrier-protein] synthase 3</fullName>
    </alternativeName>
    <alternativeName>
        <fullName evidence="1">3-oxoacyl-[acyl-carrier-protein] synthase III</fullName>
    </alternativeName>
</protein>
<keyword id="KW-0012">Acyltransferase</keyword>
<keyword id="KW-0963">Cytoplasm</keyword>
<keyword id="KW-0275">Fatty acid biosynthesis</keyword>
<keyword id="KW-0276">Fatty acid metabolism</keyword>
<keyword id="KW-0444">Lipid biosynthesis</keyword>
<keyword id="KW-0443">Lipid metabolism</keyword>
<keyword id="KW-0511">Multifunctional enzyme</keyword>
<keyword id="KW-0808">Transferase</keyword>
<dbReference type="EC" id="2.3.1.180" evidence="1"/>
<dbReference type="EMBL" id="CP001581">
    <property type="protein sequence ID" value="ACO84922.1"/>
    <property type="molecule type" value="Genomic_DNA"/>
</dbReference>
<dbReference type="RefSeq" id="WP_003359466.1">
    <property type="nucleotide sequence ID" value="NC_012563.1"/>
</dbReference>
<dbReference type="SMR" id="C1FNK7"/>
<dbReference type="KEGG" id="cby:CLM_4096"/>
<dbReference type="eggNOG" id="COG0332">
    <property type="taxonomic scope" value="Bacteria"/>
</dbReference>
<dbReference type="HOGENOM" id="CLU_039592_3_1_9"/>
<dbReference type="UniPathway" id="UPA00094"/>
<dbReference type="Proteomes" id="UP000001374">
    <property type="component" value="Chromosome"/>
</dbReference>
<dbReference type="GO" id="GO:0005737">
    <property type="term" value="C:cytoplasm"/>
    <property type="evidence" value="ECO:0007669"/>
    <property type="project" value="UniProtKB-SubCell"/>
</dbReference>
<dbReference type="GO" id="GO:0004315">
    <property type="term" value="F:3-oxoacyl-[acyl-carrier-protein] synthase activity"/>
    <property type="evidence" value="ECO:0007669"/>
    <property type="project" value="InterPro"/>
</dbReference>
<dbReference type="GO" id="GO:0033818">
    <property type="term" value="F:beta-ketoacyl-acyl-carrier-protein synthase III activity"/>
    <property type="evidence" value="ECO:0007669"/>
    <property type="project" value="UniProtKB-UniRule"/>
</dbReference>
<dbReference type="GO" id="GO:0006633">
    <property type="term" value="P:fatty acid biosynthetic process"/>
    <property type="evidence" value="ECO:0007669"/>
    <property type="project" value="UniProtKB-UniRule"/>
</dbReference>
<dbReference type="GO" id="GO:0044550">
    <property type="term" value="P:secondary metabolite biosynthetic process"/>
    <property type="evidence" value="ECO:0007669"/>
    <property type="project" value="TreeGrafter"/>
</dbReference>
<dbReference type="CDD" id="cd00830">
    <property type="entry name" value="KAS_III"/>
    <property type="match status" value="1"/>
</dbReference>
<dbReference type="FunFam" id="3.40.47.10:FF:000004">
    <property type="entry name" value="3-oxoacyl-[acyl-carrier-protein] synthase 3"/>
    <property type="match status" value="1"/>
</dbReference>
<dbReference type="Gene3D" id="3.40.47.10">
    <property type="match status" value="1"/>
</dbReference>
<dbReference type="HAMAP" id="MF_01815">
    <property type="entry name" value="FabH"/>
    <property type="match status" value="1"/>
</dbReference>
<dbReference type="InterPro" id="IPR013747">
    <property type="entry name" value="ACP_syn_III_C"/>
</dbReference>
<dbReference type="InterPro" id="IPR013751">
    <property type="entry name" value="ACP_syn_III_N"/>
</dbReference>
<dbReference type="InterPro" id="IPR004655">
    <property type="entry name" value="FabH"/>
</dbReference>
<dbReference type="InterPro" id="IPR016039">
    <property type="entry name" value="Thiolase-like"/>
</dbReference>
<dbReference type="NCBIfam" id="TIGR00747">
    <property type="entry name" value="fabH"/>
    <property type="match status" value="1"/>
</dbReference>
<dbReference type="NCBIfam" id="NF006829">
    <property type="entry name" value="PRK09352.1"/>
    <property type="match status" value="1"/>
</dbReference>
<dbReference type="PANTHER" id="PTHR34069">
    <property type="entry name" value="3-OXOACYL-[ACYL-CARRIER-PROTEIN] SYNTHASE 3"/>
    <property type="match status" value="1"/>
</dbReference>
<dbReference type="PANTHER" id="PTHR34069:SF2">
    <property type="entry name" value="BETA-KETOACYL-[ACYL-CARRIER-PROTEIN] SYNTHASE III"/>
    <property type="match status" value="1"/>
</dbReference>
<dbReference type="Pfam" id="PF08545">
    <property type="entry name" value="ACP_syn_III"/>
    <property type="match status" value="1"/>
</dbReference>
<dbReference type="Pfam" id="PF08541">
    <property type="entry name" value="ACP_syn_III_C"/>
    <property type="match status" value="1"/>
</dbReference>
<dbReference type="SUPFAM" id="SSF53901">
    <property type="entry name" value="Thiolase-like"/>
    <property type="match status" value="1"/>
</dbReference>
<accession>C1FNK7</accession>
<sequence length="326" mass="35787">MSNISVIGTGSYVPNNIITNDFLSTIVDTSDEWIRTRTGILERRISKGENTIYMATESAKEAIKNANIEANDLDLIIVATLTPDNFMPSTACSVQKEIGAINALCFDISAACSGFIYGLEIACSMLKNSFRNKALIIGAENLSKIVDWEDRNTCVLFGDGAGAAILSKTKEEGILEFHSGSNGLKGEHLTCGVLKANNTPNKNDRLEKNNFIKMNGKEIFRFAVGAMNETICNIQEKTKWNLNEVKYIISHQANSRIIEYTAKKLNTEKDKFYMNLDKYGNTSAASIPIALDEMNKRGLLNKKDKIILVGFGGGLTFGGVAIVWSI</sequence>
<name>FABH_CLOBJ</name>
<evidence type="ECO:0000255" key="1">
    <source>
        <dbReference type="HAMAP-Rule" id="MF_01815"/>
    </source>
</evidence>
<reference key="1">
    <citation type="submission" date="2008-10" db="EMBL/GenBank/DDBJ databases">
        <title>Genome sequence of Clostridium botulinum A2 Kyoto.</title>
        <authorList>
            <person name="Shrivastava S."/>
            <person name="Brinkac L.M."/>
            <person name="Brown J.L."/>
            <person name="Bruce D."/>
            <person name="Detter C.C."/>
            <person name="Johnson E.A."/>
            <person name="Munk C.A."/>
            <person name="Smith L.A."/>
            <person name="Smith T.J."/>
            <person name="Sutton G."/>
            <person name="Brettin T.S."/>
        </authorList>
    </citation>
    <scope>NUCLEOTIDE SEQUENCE [LARGE SCALE GENOMIC DNA]</scope>
    <source>
        <strain>Kyoto / Type A2</strain>
    </source>
</reference>
<comment type="function">
    <text evidence="1">Catalyzes the condensation reaction of fatty acid synthesis by the addition to an acyl acceptor of two carbons from malonyl-ACP. Catalyzes the first condensation reaction which initiates fatty acid synthesis and may therefore play a role in governing the total rate of fatty acid production. Possesses both acetoacetyl-ACP synthase and acetyl transacylase activities. Its substrate specificity determines the biosynthesis of branched-chain and/or straight-chain of fatty acids.</text>
</comment>
<comment type="catalytic activity">
    <reaction evidence="1">
        <text>malonyl-[ACP] + acetyl-CoA + H(+) = 3-oxobutanoyl-[ACP] + CO2 + CoA</text>
        <dbReference type="Rhea" id="RHEA:12080"/>
        <dbReference type="Rhea" id="RHEA-COMP:9623"/>
        <dbReference type="Rhea" id="RHEA-COMP:9625"/>
        <dbReference type="ChEBI" id="CHEBI:15378"/>
        <dbReference type="ChEBI" id="CHEBI:16526"/>
        <dbReference type="ChEBI" id="CHEBI:57287"/>
        <dbReference type="ChEBI" id="CHEBI:57288"/>
        <dbReference type="ChEBI" id="CHEBI:78449"/>
        <dbReference type="ChEBI" id="CHEBI:78450"/>
        <dbReference type="EC" id="2.3.1.180"/>
    </reaction>
</comment>
<comment type="pathway">
    <text evidence="1">Lipid metabolism; fatty acid biosynthesis.</text>
</comment>
<comment type="subunit">
    <text evidence="1">Homodimer.</text>
</comment>
<comment type="subcellular location">
    <subcellularLocation>
        <location evidence="1">Cytoplasm</location>
    </subcellularLocation>
</comment>
<comment type="domain">
    <text evidence="1">The last Arg residue of the ACP-binding site is essential for the weak association between ACP/AcpP and FabH.</text>
</comment>
<comment type="similarity">
    <text evidence="1">Belongs to the thiolase-like superfamily. FabH family.</text>
</comment>